<keyword id="KW-1185">Reference proteome</keyword>
<keyword id="KW-0687">Ribonucleoprotein</keyword>
<keyword id="KW-0689">Ribosomal protein</keyword>
<keyword id="KW-0694">RNA-binding</keyword>
<keyword id="KW-0699">rRNA-binding</keyword>
<feature type="chain" id="PRO_1000060989" description="Small ribosomal subunit protein uS19">
    <location>
        <begin position="1"/>
        <end position="91"/>
    </location>
</feature>
<proteinExistence type="inferred from homology"/>
<name>RS19_ALIB4</name>
<dbReference type="EMBL" id="CP000361">
    <property type="protein sequence ID" value="ABV67021.1"/>
    <property type="molecule type" value="Genomic_DNA"/>
</dbReference>
<dbReference type="RefSeq" id="WP_004510824.1">
    <property type="nucleotide sequence ID" value="NC_009850.1"/>
</dbReference>
<dbReference type="SMR" id="A8ESU7"/>
<dbReference type="STRING" id="367737.Abu_0756"/>
<dbReference type="GeneID" id="24304458"/>
<dbReference type="KEGG" id="abu:Abu_0756"/>
<dbReference type="eggNOG" id="COG0185">
    <property type="taxonomic scope" value="Bacteria"/>
</dbReference>
<dbReference type="HOGENOM" id="CLU_144911_0_1_7"/>
<dbReference type="Proteomes" id="UP000001136">
    <property type="component" value="Chromosome"/>
</dbReference>
<dbReference type="GO" id="GO:0005737">
    <property type="term" value="C:cytoplasm"/>
    <property type="evidence" value="ECO:0007669"/>
    <property type="project" value="UniProtKB-ARBA"/>
</dbReference>
<dbReference type="GO" id="GO:0015935">
    <property type="term" value="C:small ribosomal subunit"/>
    <property type="evidence" value="ECO:0007669"/>
    <property type="project" value="InterPro"/>
</dbReference>
<dbReference type="GO" id="GO:0019843">
    <property type="term" value="F:rRNA binding"/>
    <property type="evidence" value="ECO:0007669"/>
    <property type="project" value="UniProtKB-UniRule"/>
</dbReference>
<dbReference type="GO" id="GO:0003735">
    <property type="term" value="F:structural constituent of ribosome"/>
    <property type="evidence" value="ECO:0007669"/>
    <property type="project" value="InterPro"/>
</dbReference>
<dbReference type="GO" id="GO:0000028">
    <property type="term" value="P:ribosomal small subunit assembly"/>
    <property type="evidence" value="ECO:0007669"/>
    <property type="project" value="TreeGrafter"/>
</dbReference>
<dbReference type="GO" id="GO:0006412">
    <property type="term" value="P:translation"/>
    <property type="evidence" value="ECO:0007669"/>
    <property type="project" value="UniProtKB-UniRule"/>
</dbReference>
<dbReference type="FunFam" id="3.30.860.10:FF:000001">
    <property type="entry name" value="30S ribosomal protein S19"/>
    <property type="match status" value="1"/>
</dbReference>
<dbReference type="Gene3D" id="3.30.860.10">
    <property type="entry name" value="30s Ribosomal Protein S19, Chain A"/>
    <property type="match status" value="1"/>
</dbReference>
<dbReference type="HAMAP" id="MF_00531">
    <property type="entry name" value="Ribosomal_uS19"/>
    <property type="match status" value="1"/>
</dbReference>
<dbReference type="InterPro" id="IPR002222">
    <property type="entry name" value="Ribosomal_uS19"/>
</dbReference>
<dbReference type="InterPro" id="IPR005732">
    <property type="entry name" value="Ribosomal_uS19_bac-type"/>
</dbReference>
<dbReference type="InterPro" id="IPR020934">
    <property type="entry name" value="Ribosomal_uS19_CS"/>
</dbReference>
<dbReference type="InterPro" id="IPR023575">
    <property type="entry name" value="Ribosomal_uS19_SF"/>
</dbReference>
<dbReference type="NCBIfam" id="TIGR01050">
    <property type="entry name" value="rpsS_bact"/>
    <property type="match status" value="1"/>
</dbReference>
<dbReference type="PANTHER" id="PTHR11880">
    <property type="entry name" value="RIBOSOMAL PROTEIN S19P FAMILY MEMBER"/>
    <property type="match status" value="1"/>
</dbReference>
<dbReference type="PANTHER" id="PTHR11880:SF8">
    <property type="entry name" value="SMALL RIBOSOMAL SUBUNIT PROTEIN US19M"/>
    <property type="match status" value="1"/>
</dbReference>
<dbReference type="Pfam" id="PF00203">
    <property type="entry name" value="Ribosomal_S19"/>
    <property type="match status" value="1"/>
</dbReference>
<dbReference type="PIRSF" id="PIRSF002144">
    <property type="entry name" value="Ribosomal_S19"/>
    <property type="match status" value="1"/>
</dbReference>
<dbReference type="PRINTS" id="PR00975">
    <property type="entry name" value="RIBOSOMALS19"/>
</dbReference>
<dbReference type="SUPFAM" id="SSF54570">
    <property type="entry name" value="Ribosomal protein S19"/>
    <property type="match status" value="1"/>
</dbReference>
<dbReference type="PROSITE" id="PS00323">
    <property type="entry name" value="RIBOSOMAL_S19"/>
    <property type="match status" value="1"/>
</dbReference>
<sequence length="91" mass="10188">MARSIKKGPFVDAHLMKKVLSANSANDKKPIKTWSRRSTVLPEMIGITFNVHNGRNFVPVLITENHVGYKLGEFAPTRTFKGHKGSVQRKA</sequence>
<organism>
    <name type="scientific">Aliarcobacter butzleri (strain RM4018)</name>
    <name type="common">Arcobacter butzleri</name>
    <dbReference type="NCBI Taxonomy" id="367737"/>
    <lineage>
        <taxon>Bacteria</taxon>
        <taxon>Pseudomonadati</taxon>
        <taxon>Campylobacterota</taxon>
        <taxon>Epsilonproteobacteria</taxon>
        <taxon>Campylobacterales</taxon>
        <taxon>Arcobacteraceae</taxon>
        <taxon>Aliarcobacter</taxon>
    </lineage>
</organism>
<protein>
    <recommendedName>
        <fullName evidence="1">Small ribosomal subunit protein uS19</fullName>
    </recommendedName>
    <alternativeName>
        <fullName evidence="2">30S ribosomal protein S19</fullName>
    </alternativeName>
</protein>
<evidence type="ECO:0000255" key="1">
    <source>
        <dbReference type="HAMAP-Rule" id="MF_00531"/>
    </source>
</evidence>
<evidence type="ECO:0000305" key="2"/>
<comment type="function">
    <text evidence="1">Protein S19 forms a complex with S13 that binds strongly to the 16S ribosomal RNA.</text>
</comment>
<comment type="similarity">
    <text evidence="1">Belongs to the universal ribosomal protein uS19 family.</text>
</comment>
<reference key="1">
    <citation type="journal article" date="2007" name="PLoS ONE">
        <title>The complete genome sequence and analysis of the Epsilonproteobacterium Arcobacter butzleri.</title>
        <authorList>
            <person name="Miller W.G."/>
            <person name="Parker C.T."/>
            <person name="Rubenfield M."/>
            <person name="Mendz G.L."/>
            <person name="Woesten M.M.S.M."/>
            <person name="Ussery D.W."/>
            <person name="Stolz J.F."/>
            <person name="Binnewies T.T."/>
            <person name="Hallin P.F."/>
            <person name="Wang G."/>
            <person name="Malek J.A."/>
            <person name="Rogosin A."/>
            <person name="Stanker L.H."/>
            <person name="Mandrell R.E."/>
        </authorList>
    </citation>
    <scope>NUCLEOTIDE SEQUENCE [LARGE SCALE GENOMIC DNA]</scope>
    <source>
        <strain>RM4018</strain>
    </source>
</reference>
<gene>
    <name evidence="1" type="primary">rpsS</name>
    <name type="ordered locus">Abu_0756</name>
</gene>
<accession>A8ESU7</accession>